<gene>
    <name evidence="1" type="primary">rsmB</name>
    <name evidence="1" type="synonym">sun</name>
    <name type="ordered locus">SCH_3344</name>
</gene>
<reference key="1">
    <citation type="journal article" date="2005" name="Nucleic Acids Res.">
        <title>The genome sequence of Salmonella enterica serovar Choleraesuis, a highly invasive and resistant zoonotic pathogen.</title>
        <authorList>
            <person name="Chiu C.-H."/>
            <person name="Tang P."/>
            <person name="Chu C."/>
            <person name="Hu S."/>
            <person name="Bao Q."/>
            <person name="Yu J."/>
            <person name="Chou Y.-Y."/>
            <person name="Wang H.-S."/>
            <person name="Lee Y.-S."/>
        </authorList>
    </citation>
    <scope>NUCLEOTIDE SEQUENCE [LARGE SCALE GENOMIC DNA]</scope>
    <source>
        <strain>SC-B67</strain>
    </source>
</reference>
<keyword id="KW-0963">Cytoplasm</keyword>
<keyword id="KW-0489">Methyltransferase</keyword>
<keyword id="KW-0694">RNA-binding</keyword>
<keyword id="KW-0698">rRNA processing</keyword>
<keyword id="KW-0949">S-adenosyl-L-methionine</keyword>
<keyword id="KW-0808">Transferase</keyword>
<organism>
    <name type="scientific">Salmonella choleraesuis (strain SC-B67)</name>
    <dbReference type="NCBI Taxonomy" id="321314"/>
    <lineage>
        <taxon>Bacteria</taxon>
        <taxon>Pseudomonadati</taxon>
        <taxon>Pseudomonadota</taxon>
        <taxon>Gammaproteobacteria</taxon>
        <taxon>Enterobacterales</taxon>
        <taxon>Enterobacteriaceae</taxon>
        <taxon>Salmonella</taxon>
    </lineage>
</organism>
<feature type="chain" id="PRO_0000366165" description="Ribosomal RNA small subunit methyltransferase B">
    <location>
        <begin position="1"/>
        <end position="429"/>
    </location>
</feature>
<feature type="region of interest" description="Disordered" evidence="2">
    <location>
        <begin position="397"/>
        <end position="419"/>
    </location>
</feature>
<feature type="compositionally biased region" description="Polar residues" evidence="2">
    <location>
        <begin position="400"/>
        <end position="412"/>
    </location>
</feature>
<feature type="active site" description="Nucleophile" evidence="1">
    <location>
        <position position="375"/>
    </location>
</feature>
<feature type="binding site" evidence="1">
    <location>
        <begin position="254"/>
        <end position="260"/>
    </location>
    <ligand>
        <name>S-adenosyl-L-methionine</name>
        <dbReference type="ChEBI" id="CHEBI:59789"/>
    </ligand>
</feature>
<feature type="binding site" evidence="1">
    <location>
        <position position="277"/>
    </location>
    <ligand>
        <name>S-adenosyl-L-methionine</name>
        <dbReference type="ChEBI" id="CHEBI:59789"/>
    </ligand>
</feature>
<feature type="binding site" evidence="1">
    <location>
        <position position="303"/>
    </location>
    <ligand>
        <name>S-adenosyl-L-methionine</name>
        <dbReference type="ChEBI" id="CHEBI:59789"/>
    </ligand>
</feature>
<feature type="binding site" evidence="1">
    <location>
        <position position="322"/>
    </location>
    <ligand>
        <name>S-adenosyl-L-methionine</name>
        <dbReference type="ChEBI" id="CHEBI:59789"/>
    </ligand>
</feature>
<comment type="function">
    <text evidence="1">Specifically methylates the cytosine at position 967 (m5C967) of 16S rRNA.</text>
</comment>
<comment type="catalytic activity">
    <reaction evidence="1">
        <text>cytidine(967) in 16S rRNA + S-adenosyl-L-methionine = 5-methylcytidine(967) in 16S rRNA + S-adenosyl-L-homocysteine + H(+)</text>
        <dbReference type="Rhea" id="RHEA:42748"/>
        <dbReference type="Rhea" id="RHEA-COMP:10219"/>
        <dbReference type="Rhea" id="RHEA-COMP:10220"/>
        <dbReference type="ChEBI" id="CHEBI:15378"/>
        <dbReference type="ChEBI" id="CHEBI:57856"/>
        <dbReference type="ChEBI" id="CHEBI:59789"/>
        <dbReference type="ChEBI" id="CHEBI:74483"/>
        <dbReference type="ChEBI" id="CHEBI:82748"/>
        <dbReference type="EC" id="2.1.1.176"/>
    </reaction>
</comment>
<comment type="subcellular location">
    <subcellularLocation>
        <location evidence="1">Cytoplasm</location>
    </subcellularLocation>
</comment>
<comment type="similarity">
    <text evidence="1">Belongs to the class I-like SAM-binding methyltransferase superfamily. RsmB/NOP family.</text>
</comment>
<protein>
    <recommendedName>
        <fullName evidence="1">Ribosomal RNA small subunit methyltransferase B</fullName>
        <ecNumber evidence="1">2.1.1.176</ecNumber>
    </recommendedName>
    <alternativeName>
        <fullName evidence="1">16S rRNA m5C967 methyltransferase</fullName>
    </alternativeName>
    <alternativeName>
        <fullName evidence="1">rRNA (cytosine-C(5)-)-methyltransferase RsmB</fullName>
    </alternativeName>
</protein>
<name>RSMB_SALCH</name>
<proteinExistence type="inferred from homology"/>
<accession>Q57J62</accession>
<evidence type="ECO:0000255" key="1">
    <source>
        <dbReference type="HAMAP-Rule" id="MF_01856"/>
    </source>
</evidence>
<evidence type="ECO:0000256" key="2">
    <source>
        <dbReference type="SAM" id="MobiDB-lite"/>
    </source>
</evidence>
<sequence>MKKQNNLRSLAAQAVEQVVEQGQSLSNVLPPLQQKVADKDKALLQELCFGVLRTLSQLEWLINKLMSRPMTGKQRTVHYLIMVGFYQLLYTRVPPHAALAETVEGAVSIKRPQLKGLINGVLRQFQRQQETLLNEFATSDARFLHPGWLVKRLQNAYPTQWQRIIDANNQRPPMWLRVNRTHHTRDGWLGLLEDAGMKGYPHPDYPDAVRLETPAPVHALPGFAEGWVTVQDASAQGCAVFLAPQNGEHILDLCAAPGGKTTHILEVAPEADVLAVDIDEQRLSRVYDNLKRLGMKATVKQGDGRYPAQWCGEQQFDRILLDAPCSATGVIRRHPDIKWLRRDRDIAELAQLQAEILDAVWPRLKPGGTLVYATCSVLPEENRDQIKTFLQRTPDAALSETGTPDQPGQQNLPGGEEGDGFFYAKLIKK</sequence>
<dbReference type="EC" id="2.1.1.176" evidence="1"/>
<dbReference type="EMBL" id="AE017220">
    <property type="protein sequence ID" value="AAX67250.1"/>
    <property type="molecule type" value="Genomic_DNA"/>
</dbReference>
<dbReference type="RefSeq" id="WP_000744608.1">
    <property type="nucleotide sequence ID" value="NC_006905.1"/>
</dbReference>
<dbReference type="SMR" id="Q57J62"/>
<dbReference type="KEGG" id="sec:SCH_3344"/>
<dbReference type="HOGENOM" id="CLU_005316_0_4_6"/>
<dbReference type="Proteomes" id="UP000000538">
    <property type="component" value="Chromosome"/>
</dbReference>
<dbReference type="GO" id="GO:0005829">
    <property type="term" value="C:cytosol"/>
    <property type="evidence" value="ECO:0007669"/>
    <property type="project" value="TreeGrafter"/>
</dbReference>
<dbReference type="GO" id="GO:0003723">
    <property type="term" value="F:RNA binding"/>
    <property type="evidence" value="ECO:0007669"/>
    <property type="project" value="UniProtKB-KW"/>
</dbReference>
<dbReference type="GO" id="GO:0009383">
    <property type="term" value="F:rRNA (cytosine-C5-)-methyltransferase activity"/>
    <property type="evidence" value="ECO:0007669"/>
    <property type="project" value="TreeGrafter"/>
</dbReference>
<dbReference type="GO" id="GO:0006355">
    <property type="term" value="P:regulation of DNA-templated transcription"/>
    <property type="evidence" value="ECO:0007669"/>
    <property type="project" value="InterPro"/>
</dbReference>
<dbReference type="GO" id="GO:0070475">
    <property type="term" value="P:rRNA base methylation"/>
    <property type="evidence" value="ECO:0007669"/>
    <property type="project" value="TreeGrafter"/>
</dbReference>
<dbReference type="CDD" id="cd02440">
    <property type="entry name" value="AdoMet_MTases"/>
    <property type="match status" value="1"/>
</dbReference>
<dbReference type="CDD" id="cd00620">
    <property type="entry name" value="Methyltransferase_Sun"/>
    <property type="match status" value="1"/>
</dbReference>
<dbReference type="FunFam" id="1.10.287.730:FF:000001">
    <property type="entry name" value="Ribosomal RNA small subunit methyltransferase B"/>
    <property type="match status" value="1"/>
</dbReference>
<dbReference type="FunFam" id="1.10.940.10:FF:000002">
    <property type="entry name" value="Ribosomal RNA small subunit methyltransferase B"/>
    <property type="match status" value="1"/>
</dbReference>
<dbReference type="FunFam" id="3.30.70.1170:FF:000002">
    <property type="entry name" value="Ribosomal RNA small subunit methyltransferase B"/>
    <property type="match status" value="1"/>
</dbReference>
<dbReference type="FunFam" id="3.40.50.150:FF:000022">
    <property type="entry name" value="Ribosomal RNA small subunit methyltransferase B"/>
    <property type="match status" value="1"/>
</dbReference>
<dbReference type="Gene3D" id="1.10.287.730">
    <property type="entry name" value="Helix hairpin bin"/>
    <property type="match status" value="1"/>
</dbReference>
<dbReference type="Gene3D" id="1.10.940.10">
    <property type="entry name" value="NusB-like"/>
    <property type="match status" value="1"/>
</dbReference>
<dbReference type="Gene3D" id="3.30.70.1170">
    <property type="entry name" value="Sun protein, domain 3"/>
    <property type="match status" value="1"/>
</dbReference>
<dbReference type="Gene3D" id="3.40.50.150">
    <property type="entry name" value="Vaccinia Virus protein VP39"/>
    <property type="match status" value="1"/>
</dbReference>
<dbReference type="HAMAP" id="MF_01856">
    <property type="entry name" value="16SrRNA_methyltr_B"/>
    <property type="match status" value="1"/>
</dbReference>
<dbReference type="InterPro" id="IPR049560">
    <property type="entry name" value="MeTrfase_RsmB-F_NOP2_cat"/>
</dbReference>
<dbReference type="InterPro" id="IPR001678">
    <property type="entry name" value="MeTrfase_RsmB-F_NOP2_dom"/>
</dbReference>
<dbReference type="InterPro" id="IPR035926">
    <property type="entry name" value="NusB-like_sf"/>
</dbReference>
<dbReference type="InterPro" id="IPR006027">
    <property type="entry name" value="NusB_RsmB_TIM44"/>
</dbReference>
<dbReference type="InterPro" id="IPR023267">
    <property type="entry name" value="RCMT"/>
</dbReference>
<dbReference type="InterPro" id="IPR004573">
    <property type="entry name" value="rRNA_ssu_MeTfrase_B"/>
</dbReference>
<dbReference type="InterPro" id="IPR023541">
    <property type="entry name" value="rRNA_ssu_MeTfrase_B_ent"/>
</dbReference>
<dbReference type="InterPro" id="IPR054728">
    <property type="entry name" value="RsmB-like_ferredoxin"/>
</dbReference>
<dbReference type="InterPro" id="IPR048019">
    <property type="entry name" value="RsmB-like_N"/>
</dbReference>
<dbReference type="InterPro" id="IPR018314">
    <property type="entry name" value="RsmB/NOL1/NOP2-like_CS"/>
</dbReference>
<dbReference type="InterPro" id="IPR029063">
    <property type="entry name" value="SAM-dependent_MTases_sf"/>
</dbReference>
<dbReference type="NCBIfam" id="NF008149">
    <property type="entry name" value="PRK10901.1"/>
    <property type="match status" value="1"/>
</dbReference>
<dbReference type="NCBIfam" id="NF011494">
    <property type="entry name" value="PRK14902.1"/>
    <property type="match status" value="1"/>
</dbReference>
<dbReference type="NCBIfam" id="TIGR00563">
    <property type="entry name" value="rsmB"/>
    <property type="match status" value="1"/>
</dbReference>
<dbReference type="PANTHER" id="PTHR22807:SF61">
    <property type="entry name" value="NOL1_NOP2_SUN FAMILY PROTEIN _ ANTITERMINATION NUSB DOMAIN-CONTAINING PROTEIN"/>
    <property type="match status" value="1"/>
</dbReference>
<dbReference type="PANTHER" id="PTHR22807">
    <property type="entry name" value="NOP2 YEAST -RELATED NOL1/NOP2/FMU SUN DOMAIN-CONTAINING"/>
    <property type="match status" value="1"/>
</dbReference>
<dbReference type="Pfam" id="PF01189">
    <property type="entry name" value="Methyltr_RsmB-F"/>
    <property type="match status" value="1"/>
</dbReference>
<dbReference type="Pfam" id="PF01029">
    <property type="entry name" value="NusB"/>
    <property type="match status" value="1"/>
</dbReference>
<dbReference type="Pfam" id="PF22458">
    <property type="entry name" value="RsmF-B_ferredox"/>
    <property type="match status" value="1"/>
</dbReference>
<dbReference type="PRINTS" id="PR02008">
    <property type="entry name" value="RCMTFAMILY"/>
</dbReference>
<dbReference type="SUPFAM" id="SSF48013">
    <property type="entry name" value="NusB-like"/>
    <property type="match status" value="1"/>
</dbReference>
<dbReference type="SUPFAM" id="SSF53335">
    <property type="entry name" value="S-adenosyl-L-methionine-dependent methyltransferases"/>
    <property type="match status" value="1"/>
</dbReference>
<dbReference type="PROSITE" id="PS01153">
    <property type="entry name" value="NOL1_NOP2_SUN"/>
    <property type="match status" value="1"/>
</dbReference>
<dbReference type="PROSITE" id="PS51686">
    <property type="entry name" value="SAM_MT_RSMB_NOP"/>
    <property type="match status" value="1"/>
</dbReference>